<evidence type="ECO:0000255" key="1">
    <source>
        <dbReference type="HAMAP-Rule" id="MF_01351"/>
    </source>
</evidence>
<protein>
    <recommendedName>
        <fullName evidence="1">NADH-quinone oxidoreductase subunit I 2</fullName>
        <ecNumber evidence="1">7.1.1.-</ecNumber>
    </recommendedName>
    <alternativeName>
        <fullName evidence="1">NADH dehydrogenase I subunit I 2</fullName>
    </alternativeName>
    <alternativeName>
        <fullName evidence="1">NDH-1 subunit I 2</fullName>
    </alternativeName>
</protein>
<organism>
    <name type="scientific">Rhodopseudomonas palustris (strain BisA53)</name>
    <dbReference type="NCBI Taxonomy" id="316055"/>
    <lineage>
        <taxon>Bacteria</taxon>
        <taxon>Pseudomonadati</taxon>
        <taxon>Pseudomonadota</taxon>
        <taxon>Alphaproteobacteria</taxon>
        <taxon>Hyphomicrobiales</taxon>
        <taxon>Nitrobacteraceae</taxon>
        <taxon>Rhodopseudomonas</taxon>
    </lineage>
</organism>
<dbReference type="EC" id="7.1.1.-" evidence="1"/>
<dbReference type="EMBL" id="CP000463">
    <property type="protein sequence ID" value="ABJ06469.1"/>
    <property type="molecule type" value="Genomic_DNA"/>
</dbReference>
<dbReference type="SMR" id="Q07NL5"/>
<dbReference type="STRING" id="316055.RPE_2531"/>
<dbReference type="KEGG" id="rpe:RPE_2531"/>
<dbReference type="eggNOG" id="COG1143">
    <property type="taxonomic scope" value="Bacteria"/>
</dbReference>
<dbReference type="HOGENOM" id="CLU_067218_5_1_5"/>
<dbReference type="OrthoDB" id="9808559at2"/>
<dbReference type="GO" id="GO:0005886">
    <property type="term" value="C:plasma membrane"/>
    <property type="evidence" value="ECO:0007669"/>
    <property type="project" value="UniProtKB-SubCell"/>
</dbReference>
<dbReference type="GO" id="GO:0051539">
    <property type="term" value="F:4 iron, 4 sulfur cluster binding"/>
    <property type="evidence" value="ECO:0007669"/>
    <property type="project" value="UniProtKB-KW"/>
</dbReference>
<dbReference type="GO" id="GO:0005506">
    <property type="term" value="F:iron ion binding"/>
    <property type="evidence" value="ECO:0007669"/>
    <property type="project" value="UniProtKB-UniRule"/>
</dbReference>
<dbReference type="GO" id="GO:0050136">
    <property type="term" value="F:NADH:ubiquinone reductase (non-electrogenic) activity"/>
    <property type="evidence" value="ECO:0007669"/>
    <property type="project" value="UniProtKB-UniRule"/>
</dbReference>
<dbReference type="GO" id="GO:0048038">
    <property type="term" value="F:quinone binding"/>
    <property type="evidence" value="ECO:0007669"/>
    <property type="project" value="UniProtKB-KW"/>
</dbReference>
<dbReference type="GO" id="GO:0009060">
    <property type="term" value="P:aerobic respiration"/>
    <property type="evidence" value="ECO:0007669"/>
    <property type="project" value="TreeGrafter"/>
</dbReference>
<dbReference type="FunFam" id="3.30.70.3270:FF:000001">
    <property type="entry name" value="NADH-quinone oxidoreductase subunit I 1"/>
    <property type="match status" value="1"/>
</dbReference>
<dbReference type="Gene3D" id="3.30.70.3270">
    <property type="match status" value="1"/>
</dbReference>
<dbReference type="HAMAP" id="MF_01351">
    <property type="entry name" value="NDH1_NuoI"/>
    <property type="match status" value="1"/>
</dbReference>
<dbReference type="InterPro" id="IPR017896">
    <property type="entry name" value="4Fe4S_Fe-S-bd"/>
</dbReference>
<dbReference type="InterPro" id="IPR017900">
    <property type="entry name" value="4Fe4S_Fe_S_CS"/>
</dbReference>
<dbReference type="InterPro" id="IPR010226">
    <property type="entry name" value="NADH_quinone_OxRdtase_chainI"/>
</dbReference>
<dbReference type="NCBIfam" id="TIGR01971">
    <property type="entry name" value="NuoI"/>
    <property type="match status" value="1"/>
</dbReference>
<dbReference type="NCBIfam" id="NF004538">
    <property type="entry name" value="PRK05888.1-4"/>
    <property type="match status" value="1"/>
</dbReference>
<dbReference type="NCBIfam" id="NF004539">
    <property type="entry name" value="PRK05888.1-5"/>
    <property type="match status" value="1"/>
</dbReference>
<dbReference type="PANTHER" id="PTHR10849:SF20">
    <property type="entry name" value="NADH DEHYDROGENASE [UBIQUINONE] IRON-SULFUR PROTEIN 8, MITOCHONDRIAL"/>
    <property type="match status" value="1"/>
</dbReference>
<dbReference type="PANTHER" id="PTHR10849">
    <property type="entry name" value="NADH DEHYDROGENASE UBIQUINONE IRON-SULFUR PROTEIN 8, MITOCHONDRIAL"/>
    <property type="match status" value="1"/>
</dbReference>
<dbReference type="Pfam" id="PF12838">
    <property type="entry name" value="Fer4_7"/>
    <property type="match status" value="1"/>
</dbReference>
<dbReference type="SUPFAM" id="SSF54862">
    <property type="entry name" value="4Fe-4S ferredoxins"/>
    <property type="match status" value="1"/>
</dbReference>
<dbReference type="PROSITE" id="PS00198">
    <property type="entry name" value="4FE4S_FER_1"/>
    <property type="match status" value="2"/>
</dbReference>
<dbReference type="PROSITE" id="PS51379">
    <property type="entry name" value="4FE4S_FER_2"/>
    <property type="match status" value="2"/>
</dbReference>
<keyword id="KW-0004">4Fe-4S</keyword>
<keyword id="KW-0997">Cell inner membrane</keyword>
<keyword id="KW-1003">Cell membrane</keyword>
<keyword id="KW-0408">Iron</keyword>
<keyword id="KW-0411">Iron-sulfur</keyword>
<keyword id="KW-0472">Membrane</keyword>
<keyword id="KW-0479">Metal-binding</keyword>
<keyword id="KW-0520">NAD</keyword>
<keyword id="KW-0874">Quinone</keyword>
<keyword id="KW-0677">Repeat</keyword>
<keyword id="KW-1278">Translocase</keyword>
<keyword id="KW-0830">Ubiquinone</keyword>
<reference key="1">
    <citation type="submission" date="2006-09" db="EMBL/GenBank/DDBJ databases">
        <title>Complete sequence of Rhodopseudomonas palustris BisA53.</title>
        <authorList>
            <consortium name="US DOE Joint Genome Institute"/>
            <person name="Copeland A."/>
            <person name="Lucas S."/>
            <person name="Lapidus A."/>
            <person name="Barry K."/>
            <person name="Detter J.C."/>
            <person name="Glavina del Rio T."/>
            <person name="Hammon N."/>
            <person name="Israni S."/>
            <person name="Dalin E."/>
            <person name="Tice H."/>
            <person name="Pitluck S."/>
            <person name="Chain P."/>
            <person name="Malfatti S."/>
            <person name="Shin M."/>
            <person name="Vergez L."/>
            <person name="Schmutz J."/>
            <person name="Larimer F."/>
            <person name="Land M."/>
            <person name="Hauser L."/>
            <person name="Pelletier D.A."/>
            <person name="Kyrpides N."/>
            <person name="Kim E."/>
            <person name="Harwood C.S."/>
            <person name="Oda Y."/>
            <person name="Richardson P."/>
        </authorList>
    </citation>
    <scope>NUCLEOTIDE SEQUENCE [LARGE SCALE GENOMIC DNA]</scope>
    <source>
        <strain>BisA53</strain>
    </source>
</reference>
<feature type="chain" id="PRO_0000298542" description="NADH-quinone oxidoreductase subunit I 2">
    <location>
        <begin position="1"/>
        <end position="162"/>
    </location>
</feature>
<feature type="domain" description="4Fe-4S ferredoxin-type 1" evidence="1">
    <location>
        <begin position="52"/>
        <end position="82"/>
    </location>
</feature>
<feature type="domain" description="4Fe-4S ferredoxin-type 2" evidence="1">
    <location>
        <begin position="93"/>
        <end position="122"/>
    </location>
</feature>
<feature type="binding site" evidence="1">
    <location>
        <position position="62"/>
    </location>
    <ligand>
        <name>[4Fe-4S] cluster</name>
        <dbReference type="ChEBI" id="CHEBI:49883"/>
        <label>1</label>
    </ligand>
</feature>
<feature type="binding site" evidence="1">
    <location>
        <position position="65"/>
    </location>
    <ligand>
        <name>[4Fe-4S] cluster</name>
        <dbReference type="ChEBI" id="CHEBI:49883"/>
        <label>1</label>
    </ligand>
</feature>
<feature type="binding site" evidence="1">
    <location>
        <position position="68"/>
    </location>
    <ligand>
        <name>[4Fe-4S] cluster</name>
        <dbReference type="ChEBI" id="CHEBI:49883"/>
        <label>1</label>
    </ligand>
</feature>
<feature type="binding site" evidence="1">
    <location>
        <position position="72"/>
    </location>
    <ligand>
        <name>[4Fe-4S] cluster</name>
        <dbReference type="ChEBI" id="CHEBI:49883"/>
        <label>2</label>
    </ligand>
</feature>
<feature type="binding site" evidence="1">
    <location>
        <position position="102"/>
    </location>
    <ligand>
        <name>[4Fe-4S] cluster</name>
        <dbReference type="ChEBI" id="CHEBI:49883"/>
        <label>2</label>
    </ligand>
</feature>
<feature type="binding site" evidence="1">
    <location>
        <position position="105"/>
    </location>
    <ligand>
        <name>[4Fe-4S] cluster</name>
        <dbReference type="ChEBI" id="CHEBI:49883"/>
        <label>2</label>
    </ligand>
</feature>
<feature type="binding site" evidence="1">
    <location>
        <position position="108"/>
    </location>
    <ligand>
        <name>[4Fe-4S] cluster</name>
        <dbReference type="ChEBI" id="CHEBI:49883"/>
        <label>2</label>
    </ligand>
</feature>
<feature type="binding site" evidence="1">
    <location>
        <position position="112"/>
    </location>
    <ligand>
        <name>[4Fe-4S] cluster</name>
        <dbReference type="ChEBI" id="CHEBI:49883"/>
        <label>1</label>
    </ligand>
</feature>
<sequence length="162" mass="18571">MGVTTAARSLLLTEFVSAFFLAMRYFFKPKPTLNYPFEKGPISPRFRGEHALRRYPNGEERCIACKLCEAVCPAQAITIEAGPRRNDGTRRTERYDIDMVKCIYCGLCQEACPVDAIVEGPNFEFATETREELYYDKAKLLANGDRWEREIAKHMALDAPYR</sequence>
<name>NUOI2_RHOP5</name>
<comment type="function">
    <text evidence="1">NDH-1 shuttles electrons from NADH, via FMN and iron-sulfur (Fe-S) centers, to quinones in the respiratory chain. The immediate electron acceptor for the enzyme in this species is believed to be ubiquinone. Couples the redox reaction to proton translocation (for every two electrons transferred, four hydrogen ions are translocated across the cytoplasmic membrane), and thus conserves the redox energy in a proton gradient.</text>
</comment>
<comment type="catalytic activity">
    <reaction evidence="1">
        <text>a quinone + NADH + 5 H(+)(in) = a quinol + NAD(+) + 4 H(+)(out)</text>
        <dbReference type="Rhea" id="RHEA:57888"/>
        <dbReference type="ChEBI" id="CHEBI:15378"/>
        <dbReference type="ChEBI" id="CHEBI:24646"/>
        <dbReference type="ChEBI" id="CHEBI:57540"/>
        <dbReference type="ChEBI" id="CHEBI:57945"/>
        <dbReference type="ChEBI" id="CHEBI:132124"/>
    </reaction>
</comment>
<comment type="cofactor">
    <cofactor evidence="1">
        <name>[4Fe-4S] cluster</name>
        <dbReference type="ChEBI" id="CHEBI:49883"/>
    </cofactor>
    <text evidence="1">Binds 2 [4Fe-4S] clusters per subunit.</text>
</comment>
<comment type="subunit">
    <text evidence="1">NDH-1 is composed of 14 different subunits. Subunits NuoA, H, J, K, L, M, N constitute the membrane sector of the complex.</text>
</comment>
<comment type="subcellular location">
    <subcellularLocation>
        <location evidence="1">Cell inner membrane</location>
        <topology evidence="1">Peripheral membrane protein</topology>
    </subcellularLocation>
</comment>
<comment type="similarity">
    <text evidence="1">Belongs to the complex I 23 kDa subunit family.</text>
</comment>
<proteinExistence type="inferred from homology"/>
<accession>Q07NL5</accession>
<gene>
    <name evidence="1" type="primary">nuoI2</name>
    <name type="ordered locus">RPE_2531</name>
</gene>